<feature type="chain" id="PRO_0000115300" description="Uncharacterized protein UL2">
    <location>
        <begin position="1"/>
        <end position="60"/>
    </location>
</feature>
<feature type="transmembrane region" description="Helical" evidence="1">
    <location>
        <begin position="33"/>
        <end position="55"/>
    </location>
</feature>
<protein>
    <recommendedName>
        <fullName>Uncharacterized protein UL2</fullName>
    </recommendedName>
</protein>
<dbReference type="EMBL" id="X17403">
    <property type="protein sequence ID" value="CAA35435.1"/>
    <property type="molecule type" value="Genomic_DNA"/>
</dbReference>
<dbReference type="EMBL" id="BK000394">
    <property type="protein sequence ID" value="DAA00123.1"/>
    <property type="molecule type" value="Genomic_DNA"/>
</dbReference>
<dbReference type="PIR" id="S09765">
    <property type="entry name" value="S09765"/>
</dbReference>
<dbReference type="SMR" id="P16754"/>
<dbReference type="Proteomes" id="UP000008991">
    <property type="component" value="Segment"/>
</dbReference>
<dbReference type="Proteomes" id="UP000008992">
    <property type="component" value="Segment"/>
</dbReference>
<dbReference type="GO" id="GO:0033644">
    <property type="term" value="C:host cell membrane"/>
    <property type="evidence" value="ECO:0007669"/>
    <property type="project" value="UniProtKB-SubCell"/>
</dbReference>
<dbReference type="GO" id="GO:0016020">
    <property type="term" value="C:membrane"/>
    <property type="evidence" value="ECO:0007669"/>
    <property type="project" value="UniProtKB-KW"/>
</dbReference>
<dbReference type="InterPro" id="IPR013269">
    <property type="entry name" value="Herpes_UL2"/>
</dbReference>
<dbReference type="Pfam" id="PF08196">
    <property type="entry name" value="UL2"/>
    <property type="match status" value="1"/>
</dbReference>
<name>UL02_HCMVA</name>
<proteinExistence type="inferred from homology"/>
<accession>P16754</accession>
<accession>Q7M6R3</accession>
<organism>
    <name type="scientific">Human cytomegalovirus (strain AD169)</name>
    <name type="common">HHV-5</name>
    <name type="synonym">Human herpesvirus 5</name>
    <dbReference type="NCBI Taxonomy" id="10360"/>
    <lineage>
        <taxon>Viruses</taxon>
        <taxon>Duplodnaviria</taxon>
        <taxon>Heunggongvirae</taxon>
        <taxon>Peploviricota</taxon>
        <taxon>Herviviricetes</taxon>
        <taxon>Herpesvirales</taxon>
        <taxon>Orthoherpesviridae</taxon>
        <taxon>Betaherpesvirinae</taxon>
        <taxon>Cytomegalovirus</taxon>
        <taxon>Cytomegalovirus humanbeta5</taxon>
        <taxon>Human cytomegalovirus</taxon>
    </lineage>
</organism>
<evidence type="ECO:0000255" key="1"/>
<evidence type="ECO:0000305" key="2"/>
<comment type="subcellular location">
    <subcellularLocation>
        <location evidence="2">Host membrane</location>
        <topology evidence="2">Single-pass membrane protein</topology>
    </subcellularLocation>
</comment>
<comment type="similarity">
    <text evidence="2">Belongs to the HHV-5 UL2 protein family.</text>
</comment>
<reference key="1">
    <citation type="journal article" date="1990" name="Curr. Top. Microbiol. Immunol.">
        <title>Analysis of the protein-coding content of the sequence of human cytomegalovirus strain AD169.</title>
        <authorList>
            <person name="Chee M.S."/>
            <person name="Bankier A.T."/>
            <person name="Beck S."/>
            <person name="Bohni R."/>
            <person name="Brown C.M."/>
            <person name="Cerny R."/>
            <person name="Horsnell T."/>
            <person name="Hutchison C.A. III"/>
            <person name="Kouzarides T."/>
            <person name="Martignetti J.A."/>
            <person name="Preddie E."/>
            <person name="Satchwell S.C."/>
            <person name="Tomlinson P."/>
            <person name="Weston K.M."/>
            <person name="Barrell B.G."/>
        </authorList>
    </citation>
    <scope>NUCLEOTIDE SEQUENCE [LARGE SCALE GENOMIC DNA]</scope>
</reference>
<reference key="2">
    <citation type="journal article" date="2003" name="J. Gen. Virol.">
        <title>The human cytomegalovirus genome revisited: comparison with the chimpanzee cytomegalovirus genome.</title>
        <authorList>
            <person name="Davison A.J."/>
            <person name="Dolan A."/>
            <person name="Akter P."/>
            <person name="Addison C."/>
            <person name="Dargan D.J."/>
            <person name="Alcendor D.J."/>
            <person name="McGeoch D.J."/>
            <person name="Hayward G.S."/>
        </authorList>
    </citation>
    <scope>GENOME REANNOTATION</scope>
</reference>
<reference key="3">
    <citation type="journal article" date="2003" name="J. Gen. Virol.">
        <authorList>
            <person name="Davison A.J."/>
            <person name="Dolan A."/>
            <person name="Akter P."/>
            <person name="Addison C."/>
            <person name="Dargan D.J."/>
            <person name="Alcendor D.J."/>
            <person name="McGeoch D.J."/>
            <person name="Hayward G.S."/>
        </authorList>
    </citation>
    <scope>ERRATUM OF PUBMED:12533697</scope>
</reference>
<gene>
    <name type="primary">UL2</name>
</gene>
<sequence length="60" mass="6762">MAEDSVAILIVEDDNDAYPSFGTLPASHAQYGFRLLRGIFLITLVIWTVVWLKLLRDALL</sequence>
<organismHost>
    <name type="scientific">Homo sapiens</name>
    <name type="common">Human</name>
    <dbReference type="NCBI Taxonomy" id="9606"/>
</organismHost>
<keyword id="KW-1043">Host membrane</keyword>
<keyword id="KW-0472">Membrane</keyword>
<keyword id="KW-1185">Reference proteome</keyword>
<keyword id="KW-0812">Transmembrane</keyword>
<keyword id="KW-1133">Transmembrane helix</keyword>